<reference key="1">
    <citation type="journal article" date="2006" name="J. Bacteriol.">
        <title>The Methanosarcina barkeri genome: comparative analysis with Methanosarcina acetivorans and Methanosarcina mazei reveals extensive rearrangement within methanosarcinal genomes.</title>
        <authorList>
            <person name="Maeder D.L."/>
            <person name="Anderson I."/>
            <person name="Brettin T.S."/>
            <person name="Bruce D.C."/>
            <person name="Gilna P."/>
            <person name="Han C.S."/>
            <person name="Lapidus A."/>
            <person name="Metcalf W.W."/>
            <person name="Saunders E."/>
            <person name="Tapia R."/>
            <person name="Sowers K.R."/>
        </authorList>
    </citation>
    <scope>NUCLEOTIDE SEQUENCE [LARGE SCALE GENOMIC DNA]</scope>
    <source>
        <strain>Fusaro / DSM 804</strain>
    </source>
</reference>
<protein>
    <recommendedName>
        <fullName evidence="1">UPF0179 protein Mbar_A0292</fullName>
    </recommendedName>
</protein>
<feature type="chain" id="PRO_0000378128" description="UPF0179 protein Mbar_A0292">
    <location>
        <begin position="1"/>
        <end position="149"/>
    </location>
</feature>
<accession>Q46FR6</accession>
<organism>
    <name type="scientific">Methanosarcina barkeri (strain Fusaro / DSM 804)</name>
    <dbReference type="NCBI Taxonomy" id="269797"/>
    <lineage>
        <taxon>Archaea</taxon>
        <taxon>Methanobacteriati</taxon>
        <taxon>Methanobacteriota</taxon>
        <taxon>Stenosarchaea group</taxon>
        <taxon>Methanomicrobia</taxon>
        <taxon>Methanosarcinales</taxon>
        <taxon>Methanosarcinaceae</taxon>
        <taxon>Methanosarcina</taxon>
    </lineage>
</organism>
<proteinExistence type="inferred from homology"/>
<comment type="similarity">
    <text evidence="1">Belongs to the UPF0179 family.</text>
</comment>
<sequence>MTESDTKITLIGSRLAREGLEFIFKGEMPECKKCRLKNTCLNLEPGRRYRVERIRNKDIHECFLHDSGVVAVDVSKAPILTTLESRKAVDGAKIMYEPPKCGKRECEIYEICHPEGLSRGDKCKIVEVLENLDSKCEANYSLKKVKLSW</sequence>
<evidence type="ECO:0000255" key="1">
    <source>
        <dbReference type="HAMAP-Rule" id="MF_00498"/>
    </source>
</evidence>
<dbReference type="EMBL" id="CP000099">
    <property type="protein sequence ID" value="AAZ69276.1"/>
    <property type="molecule type" value="Genomic_DNA"/>
</dbReference>
<dbReference type="STRING" id="269797.Mbar_A0292"/>
<dbReference type="PaxDb" id="269797-Mbar_A0292"/>
<dbReference type="KEGG" id="mba:Mbar_A0292"/>
<dbReference type="eggNOG" id="arCOG04477">
    <property type="taxonomic scope" value="Archaea"/>
</dbReference>
<dbReference type="HOGENOM" id="CLU_121764_0_0_2"/>
<dbReference type="OrthoDB" id="24613at2157"/>
<dbReference type="HAMAP" id="MF_00498">
    <property type="entry name" value="UPF0179"/>
    <property type="match status" value="1"/>
</dbReference>
<dbReference type="InterPro" id="IPR005369">
    <property type="entry name" value="UPF0179"/>
</dbReference>
<dbReference type="PANTHER" id="PTHR40699">
    <property type="entry name" value="UPF0179 PROTEIN MJ1627"/>
    <property type="match status" value="1"/>
</dbReference>
<dbReference type="PANTHER" id="PTHR40699:SF1">
    <property type="entry name" value="UPF0179 PROTEIN MJ1627"/>
    <property type="match status" value="1"/>
</dbReference>
<dbReference type="Pfam" id="PF03684">
    <property type="entry name" value="UPF0179"/>
    <property type="match status" value="1"/>
</dbReference>
<dbReference type="PIRSF" id="PIRSF006595">
    <property type="entry name" value="UCP006595"/>
    <property type="match status" value="1"/>
</dbReference>
<gene>
    <name type="ordered locus">Mbar_A0292</name>
</gene>
<name>Y292_METBF</name>